<keyword id="KW-0002">3D-structure</keyword>
<keyword id="KW-0963">Cytoplasm</keyword>
<keyword id="KW-0489">Methyltransferase</keyword>
<keyword id="KW-0949">S-adenosyl-L-methionine</keyword>
<keyword id="KW-0808">Transferase</keyword>
<gene>
    <name evidence="1" type="primary">pcm</name>
    <name type="ordered locus">VC0395_A0060</name>
    <name type="ordered locus">VC395_0549</name>
</gene>
<evidence type="ECO:0000255" key="1">
    <source>
        <dbReference type="HAMAP-Rule" id="MF_00090"/>
    </source>
</evidence>
<evidence type="ECO:0007829" key="2">
    <source>
        <dbReference type="PDB" id="4L7V"/>
    </source>
</evidence>
<organism>
    <name type="scientific">Vibrio cholerae serotype O1 (strain ATCC 39541 / Classical Ogawa 395 / O395)</name>
    <dbReference type="NCBI Taxonomy" id="345073"/>
    <lineage>
        <taxon>Bacteria</taxon>
        <taxon>Pseudomonadati</taxon>
        <taxon>Pseudomonadota</taxon>
        <taxon>Gammaproteobacteria</taxon>
        <taxon>Vibrionales</taxon>
        <taxon>Vibrionaceae</taxon>
        <taxon>Vibrio</taxon>
    </lineage>
</organism>
<feature type="chain" id="PRO_1000071256" description="Protein-L-isoaspartate O-methyltransferase">
    <location>
        <begin position="1"/>
        <end position="208"/>
    </location>
</feature>
<feature type="active site" evidence="1">
    <location>
        <position position="59"/>
    </location>
</feature>
<feature type="helix" evidence="2">
    <location>
        <begin position="4"/>
        <end position="15"/>
    </location>
</feature>
<feature type="helix" evidence="2">
    <location>
        <begin position="21"/>
        <end position="28"/>
    </location>
</feature>
<feature type="helix" evidence="2">
    <location>
        <begin position="32"/>
        <end position="34"/>
    </location>
</feature>
<feature type="helix" evidence="2">
    <location>
        <begin position="61"/>
        <end position="70"/>
    </location>
</feature>
<feature type="strand" evidence="2">
    <location>
        <begin position="78"/>
        <end position="82"/>
    </location>
</feature>
<feature type="helix" evidence="2">
    <location>
        <begin position="88"/>
        <end position="94"/>
    </location>
</feature>
<feature type="strand" evidence="2">
    <location>
        <begin position="97"/>
        <end position="106"/>
    </location>
</feature>
<feature type="helix" evidence="2">
    <location>
        <begin position="107"/>
        <end position="119"/>
    </location>
</feature>
<feature type="strand" evidence="2">
    <location>
        <begin position="124"/>
        <end position="130"/>
    </location>
</feature>
<feature type="helix" evidence="2">
    <location>
        <begin position="132"/>
        <end position="134"/>
    </location>
</feature>
<feature type="strand" evidence="2">
    <location>
        <begin position="142"/>
        <end position="147"/>
    </location>
</feature>
<feature type="strand" evidence="2">
    <location>
        <begin position="149"/>
        <end position="153"/>
    </location>
</feature>
<feature type="helix" evidence="2">
    <location>
        <begin position="156"/>
        <end position="160"/>
    </location>
</feature>
<feature type="strand" evidence="2">
    <location>
        <begin position="162"/>
        <end position="185"/>
    </location>
</feature>
<feature type="strand" evidence="2">
    <location>
        <begin position="188"/>
        <end position="196"/>
    </location>
</feature>
<sequence length="208" mass="22862">MANPKADRLIQFLTEQGITSPQVLAAIHALPREFFVAPAMMHQAYDNNALPIGQGQTISQPYIVAKMTELLALTPETKVLEIGTGSGYQTAVLAKLVNHVFTVERIKTLQWDAKRRLKQLDIYNVSTKHGDGWQGWPARGPFDAILVTAAAAKVPQSLLDQLAEGGRMVIPVGEDEQYLYKIVRQGGQFISERVEAVRFVPLVAGDLA</sequence>
<proteinExistence type="evidence at protein level"/>
<accession>A5F9C1</accession>
<accession>C3LX58</accession>
<reference key="1">
    <citation type="submission" date="2007-03" db="EMBL/GenBank/DDBJ databases">
        <authorList>
            <person name="Heidelberg J."/>
        </authorList>
    </citation>
    <scope>NUCLEOTIDE SEQUENCE [LARGE SCALE GENOMIC DNA]</scope>
    <source>
        <strain>ATCC 39541 / Classical Ogawa 395 / O395</strain>
    </source>
</reference>
<reference key="2">
    <citation type="journal article" date="2008" name="PLoS ONE">
        <title>A recalibrated molecular clock and independent origins for the cholera pandemic clones.</title>
        <authorList>
            <person name="Feng L."/>
            <person name="Reeves P.R."/>
            <person name="Lan R."/>
            <person name="Ren Y."/>
            <person name="Gao C."/>
            <person name="Zhou Z."/>
            <person name="Ren Y."/>
            <person name="Cheng J."/>
            <person name="Wang W."/>
            <person name="Wang J."/>
            <person name="Qian W."/>
            <person name="Li D."/>
            <person name="Wang L."/>
        </authorList>
    </citation>
    <scope>NUCLEOTIDE SEQUENCE [LARGE SCALE GENOMIC DNA]</scope>
    <source>
        <strain>ATCC 39541 / Classical Ogawa 395 / O395</strain>
    </source>
</reference>
<name>PIMT_VIBC3</name>
<protein>
    <recommendedName>
        <fullName evidence="1">Protein-L-isoaspartate O-methyltransferase</fullName>
        <ecNumber evidence="1">2.1.1.77</ecNumber>
    </recommendedName>
    <alternativeName>
        <fullName evidence="1">L-isoaspartyl protein carboxyl methyltransferase</fullName>
    </alternativeName>
    <alternativeName>
        <fullName evidence="1">Protein L-isoaspartyl methyltransferase</fullName>
    </alternativeName>
    <alternativeName>
        <fullName evidence="1">Protein-beta-aspartate methyltransferase</fullName>
        <shortName evidence="1">PIMT</shortName>
    </alternativeName>
</protein>
<dbReference type="EC" id="2.1.1.77" evidence="1"/>
<dbReference type="EMBL" id="CP000627">
    <property type="protein sequence ID" value="ABQ21782.1"/>
    <property type="molecule type" value="Genomic_DNA"/>
</dbReference>
<dbReference type="EMBL" id="CP001235">
    <property type="protein sequence ID" value="ACP08568.1"/>
    <property type="molecule type" value="Genomic_DNA"/>
</dbReference>
<dbReference type="RefSeq" id="WP_000002982.1">
    <property type="nucleotide sequence ID" value="NZ_JAACZH010000029.1"/>
</dbReference>
<dbReference type="PDB" id="4L7V">
    <property type="method" value="X-ray"/>
    <property type="resolution" value="2.05 A"/>
    <property type="chains" value="A=1-208"/>
</dbReference>
<dbReference type="PDBsum" id="4L7V"/>
<dbReference type="SMR" id="A5F9C1"/>
<dbReference type="KEGG" id="vco:VC0395_A0060"/>
<dbReference type="KEGG" id="vcr:VC395_0549"/>
<dbReference type="PATRIC" id="fig|345073.21.peg.539"/>
<dbReference type="eggNOG" id="COG2518">
    <property type="taxonomic scope" value="Bacteria"/>
</dbReference>
<dbReference type="HOGENOM" id="CLU_055432_2_0_6"/>
<dbReference type="OrthoDB" id="9810066at2"/>
<dbReference type="BRENDA" id="2.1.1.77">
    <property type="organism ID" value="15862"/>
</dbReference>
<dbReference type="EvolutionaryTrace" id="A5F9C1"/>
<dbReference type="Proteomes" id="UP000000249">
    <property type="component" value="Chromosome 2"/>
</dbReference>
<dbReference type="GO" id="GO:0005737">
    <property type="term" value="C:cytoplasm"/>
    <property type="evidence" value="ECO:0007669"/>
    <property type="project" value="UniProtKB-SubCell"/>
</dbReference>
<dbReference type="GO" id="GO:0004719">
    <property type="term" value="F:protein-L-isoaspartate (D-aspartate) O-methyltransferase activity"/>
    <property type="evidence" value="ECO:0007669"/>
    <property type="project" value="UniProtKB-UniRule"/>
</dbReference>
<dbReference type="GO" id="GO:0032259">
    <property type="term" value="P:methylation"/>
    <property type="evidence" value="ECO:0007669"/>
    <property type="project" value="UniProtKB-KW"/>
</dbReference>
<dbReference type="GO" id="GO:0036211">
    <property type="term" value="P:protein modification process"/>
    <property type="evidence" value="ECO:0007669"/>
    <property type="project" value="UniProtKB-UniRule"/>
</dbReference>
<dbReference type="GO" id="GO:0030091">
    <property type="term" value="P:protein repair"/>
    <property type="evidence" value="ECO:0007669"/>
    <property type="project" value="UniProtKB-UniRule"/>
</dbReference>
<dbReference type="CDD" id="cd02440">
    <property type="entry name" value="AdoMet_MTases"/>
    <property type="match status" value="1"/>
</dbReference>
<dbReference type="FunFam" id="3.40.50.150:FF:000010">
    <property type="entry name" value="Protein-L-isoaspartate O-methyltransferase"/>
    <property type="match status" value="1"/>
</dbReference>
<dbReference type="Gene3D" id="3.40.50.150">
    <property type="entry name" value="Vaccinia Virus protein VP39"/>
    <property type="match status" value="1"/>
</dbReference>
<dbReference type="HAMAP" id="MF_00090">
    <property type="entry name" value="PIMT"/>
    <property type="match status" value="1"/>
</dbReference>
<dbReference type="InterPro" id="IPR000682">
    <property type="entry name" value="PCMT"/>
</dbReference>
<dbReference type="InterPro" id="IPR029063">
    <property type="entry name" value="SAM-dependent_MTases_sf"/>
</dbReference>
<dbReference type="NCBIfam" id="TIGR00080">
    <property type="entry name" value="pimt"/>
    <property type="match status" value="1"/>
</dbReference>
<dbReference type="NCBIfam" id="NF001453">
    <property type="entry name" value="PRK00312.1"/>
    <property type="match status" value="1"/>
</dbReference>
<dbReference type="PANTHER" id="PTHR11579">
    <property type="entry name" value="PROTEIN-L-ISOASPARTATE O-METHYLTRANSFERASE"/>
    <property type="match status" value="1"/>
</dbReference>
<dbReference type="PANTHER" id="PTHR11579:SF0">
    <property type="entry name" value="PROTEIN-L-ISOASPARTATE(D-ASPARTATE) O-METHYLTRANSFERASE"/>
    <property type="match status" value="1"/>
</dbReference>
<dbReference type="Pfam" id="PF01135">
    <property type="entry name" value="PCMT"/>
    <property type="match status" value="1"/>
</dbReference>
<dbReference type="SUPFAM" id="SSF53335">
    <property type="entry name" value="S-adenosyl-L-methionine-dependent methyltransferases"/>
    <property type="match status" value="1"/>
</dbReference>
<dbReference type="PROSITE" id="PS01279">
    <property type="entry name" value="PCMT"/>
    <property type="match status" value="1"/>
</dbReference>
<comment type="function">
    <text evidence="1">Catalyzes the methyl esterification of L-isoaspartyl residues in peptides and proteins that result from spontaneous decomposition of normal L-aspartyl and L-asparaginyl residues. It plays a role in the repair and/or degradation of damaged proteins.</text>
</comment>
<comment type="catalytic activity">
    <reaction evidence="1">
        <text>[protein]-L-isoaspartate + S-adenosyl-L-methionine = [protein]-L-isoaspartate alpha-methyl ester + S-adenosyl-L-homocysteine</text>
        <dbReference type="Rhea" id="RHEA:12705"/>
        <dbReference type="Rhea" id="RHEA-COMP:12143"/>
        <dbReference type="Rhea" id="RHEA-COMP:12144"/>
        <dbReference type="ChEBI" id="CHEBI:57856"/>
        <dbReference type="ChEBI" id="CHEBI:59789"/>
        <dbReference type="ChEBI" id="CHEBI:90596"/>
        <dbReference type="ChEBI" id="CHEBI:90598"/>
        <dbReference type="EC" id="2.1.1.77"/>
    </reaction>
</comment>
<comment type="subcellular location">
    <subcellularLocation>
        <location evidence="1">Cytoplasm</location>
    </subcellularLocation>
</comment>
<comment type="similarity">
    <text evidence="1">Belongs to the methyltransferase superfamily. L-isoaspartyl/D-aspartyl protein methyltransferase family.</text>
</comment>